<protein>
    <recommendedName>
        <fullName evidence="4 5">Attacin-A</fullName>
        <shortName evidence="7">AttA</shortName>
        <shortName evidence="4">GmAttA</shortName>
    </recommendedName>
</protein>
<evidence type="ECO:0000255" key="1"/>
<evidence type="ECO:0000269" key="2">
    <source>
    </source>
</evidence>
<evidence type="ECO:0000269" key="3">
    <source>
    </source>
</evidence>
<evidence type="ECO:0000303" key="4">
    <source>
    </source>
</evidence>
<evidence type="ECO:0000303" key="5">
    <source>
    </source>
</evidence>
<evidence type="ECO:0000305" key="6"/>
<evidence type="ECO:0000312" key="7">
    <source>
        <dbReference type="EMBL" id="AAL34113.1"/>
    </source>
</evidence>
<reference evidence="6 7" key="1">
    <citation type="journal article" date="2001" name="Proc. Natl. Acad. Sci. U.S.A.">
        <title>Tsetse immune responses and trypanosome transmission: implications for the development of tsetse-based strategies to reduce trypanosomiasis.</title>
        <authorList>
            <person name="Hao Z."/>
            <person name="Kasumba I."/>
            <person name="Lehane M.J."/>
            <person name="Gibson W.C."/>
            <person name="Kwon J."/>
            <person name="Aksoy S."/>
        </authorList>
    </citation>
    <scope>NUCLEOTIDE SEQUENCE [MRNA]</scope>
    <scope>FUNCTION</scope>
    <scope>SUBCELLULAR LOCATION</scope>
    <scope>TISSUE SPECIFICITY</scope>
    <scope>INDUCTION</scope>
</reference>
<reference evidence="6" key="2">
    <citation type="journal article" date="2002" name="Insect Biochem. Mol. Biol.">
        <title>Immunopeptides in the defense reactions of Glossina morsitans to bacterial and Trypanosoma brucei brucei infections.</title>
        <authorList>
            <person name="Boulanger N."/>
            <person name="Brun R."/>
            <person name="Ehret-Sabatier L."/>
            <person name="Kunz C."/>
            <person name="Bulet P."/>
        </authorList>
    </citation>
    <scope>PROTEIN SEQUENCE OF 48-69</scope>
    <scope>FUNCTION</scope>
    <scope>SUBCELLULAR LOCATION</scope>
    <scope>TISSUE SPECIFICITY</scope>
    <scope>INDUCTION</scope>
    <scope>MASS SPECTROMETRY</scope>
    <source>
        <tissue evidence="3">Hemolymph</tissue>
    </source>
</reference>
<dbReference type="EMBL" id="AF368909">
    <property type="protein sequence ID" value="AAL34113.1"/>
    <property type="molecule type" value="mRNA"/>
</dbReference>
<dbReference type="STRING" id="37546.Q8WTD3"/>
<dbReference type="Proteomes" id="UP000092444">
    <property type="component" value="Unassembled WGS sequence"/>
</dbReference>
<dbReference type="GO" id="GO:0005576">
    <property type="term" value="C:extracellular region"/>
    <property type="evidence" value="ECO:0000314"/>
    <property type="project" value="UniProtKB"/>
</dbReference>
<dbReference type="GO" id="GO:0019731">
    <property type="term" value="P:antibacterial humoral response"/>
    <property type="evidence" value="ECO:0000314"/>
    <property type="project" value="UniProtKB"/>
</dbReference>
<dbReference type="GO" id="GO:0050829">
    <property type="term" value="P:defense response to Gram-negative bacterium"/>
    <property type="evidence" value="ECO:0000314"/>
    <property type="project" value="UniProtKB"/>
</dbReference>
<dbReference type="GO" id="GO:0045087">
    <property type="term" value="P:innate immune response"/>
    <property type="evidence" value="ECO:0007669"/>
    <property type="project" value="UniProtKB-KW"/>
</dbReference>
<dbReference type="InterPro" id="IPR005521">
    <property type="entry name" value="Attacin_C"/>
</dbReference>
<dbReference type="InterPro" id="IPR005520">
    <property type="entry name" value="Attacin_N"/>
</dbReference>
<dbReference type="Pfam" id="PF03769">
    <property type="entry name" value="Attacin_C"/>
    <property type="match status" value="1"/>
</dbReference>
<dbReference type="Pfam" id="PF03768">
    <property type="entry name" value="Attacin_N"/>
    <property type="match status" value="1"/>
</dbReference>
<sequence>MQSFKICFFISCLSVVLVKGQFGGTVSSNPNGGLDVNARLSKTIGDPNANVVGGVFAAGNTDGGPATRGAFLAANKDGHGLSLQHSKTDNFGSSLTSSAHAHLFNDKTHKLDANAFHSRTHLDNGFKFDRVGGGLRYDHVTGHGASLTASRIPQLDMNTLGLTGKANLWSSPNRATTLDLTGGVSKHFGGPFDGQTNKQIGLGLNSRF</sequence>
<name>ATTA_GLOMM</name>
<keyword id="KW-0044">Antibiotic</keyword>
<keyword id="KW-0929">Antimicrobial</keyword>
<keyword id="KW-0903">Direct protein sequencing</keyword>
<keyword id="KW-0391">Immunity</keyword>
<keyword id="KW-0399">Innate immunity</keyword>
<keyword id="KW-0964">Secreted</keyword>
<keyword id="KW-0732">Signal</keyword>
<accession>Q8WTD3</accession>
<feature type="signal peptide" evidence="1">
    <location>
        <begin position="1"/>
        <end position="20"/>
    </location>
</feature>
<feature type="propeptide" id="PRO_0000386435" evidence="1 3">
    <location>
        <begin position="21"/>
        <end position="47"/>
    </location>
</feature>
<feature type="chain" id="PRO_0000386436" description="Attacin-A" evidence="3">
    <location>
        <begin position="48"/>
        <end position="208"/>
    </location>
</feature>
<proteinExistence type="evidence at protein level"/>
<organism>
    <name type="scientific">Glossina morsitans morsitans</name>
    <name type="common">Savannah tsetse fly</name>
    <dbReference type="NCBI Taxonomy" id="37546"/>
    <lineage>
        <taxon>Eukaryota</taxon>
        <taxon>Metazoa</taxon>
        <taxon>Ecdysozoa</taxon>
        <taxon>Arthropoda</taxon>
        <taxon>Hexapoda</taxon>
        <taxon>Insecta</taxon>
        <taxon>Pterygota</taxon>
        <taxon>Neoptera</taxon>
        <taxon>Endopterygota</taxon>
        <taxon>Diptera</taxon>
        <taxon>Brachycera</taxon>
        <taxon>Muscomorpha</taxon>
        <taxon>Hippoboscoidea</taxon>
        <taxon>Glossinidae</taxon>
        <taxon>Glossina</taxon>
    </lineage>
</organism>
<comment type="function">
    <text evidence="2 3">Hemolymph antibacterial protein against Gram-negative bacteria.</text>
</comment>
<comment type="subcellular location">
    <subcellularLocation>
        <location evidence="2 3">Secreted</location>
    </subcellularLocation>
</comment>
<comment type="tissue specificity">
    <text evidence="2 3">Hemolymph and fat body.</text>
</comment>
<comment type="induction">
    <text evidence="2 3">By bacterial infection.</text>
</comment>
<comment type="mass spectrometry"/>
<comment type="similarity">
    <text evidence="1">Belongs to the attacin/sarcotoxin-2 family.</text>
</comment>